<comment type="function">
    <text evidence="1">Catalyzes two activities which are involved in the cyclic version of arginine biosynthesis: the synthesis of acetylglutamate from glutamate and acetyl-CoA, and of ornithine by transacetylation between acetylornithine and glutamate.</text>
</comment>
<comment type="catalytic activity">
    <reaction evidence="1">
        <text>N(2)-acetyl-L-ornithine + L-glutamate = N-acetyl-L-glutamate + L-ornithine</text>
        <dbReference type="Rhea" id="RHEA:15349"/>
        <dbReference type="ChEBI" id="CHEBI:29985"/>
        <dbReference type="ChEBI" id="CHEBI:44337"/>
        <dbReference type="ChEBI" id="CHEBI:46911"/>
        <dbReference type="ChEBI" id="CHEBI:57805"/>
        <dbReference type="EC" id="2.3.1.35"/>
    </reaction>
</comment>
<comment type="catalytic activity">
    <reaction evidence="1">
        <text>L-glutamate + acetyl-CoA = N-acetyl-L-glutamate + CoA + H(+)</text>
        <dbReference type="Rhea" id="RHEA:24292"/>
        <dbReference type="ChEBI" id="CHEBI:15378"/>
        <dbReference type="ChEBI" id="CHEBI:29985"/>
        <dbReference type="ChEBI" id="CHEBI:44337"/>
        <dbReference type="ChEBI" id="CHEBI:57287"/>
        <dbReference type="ChEBI" id="CHEBI:57288"/>
        <dbReference type="EC" id="2.3.1.1"/>
    </reaction>
</comment>
<comment type="pathway">
    <text evidence="1">Amino-acid biosynthesis; L-arginine biosynthesis; L-ornithine and N-acetyl-L-glutamate from L-glutamate and N(2)-acetyl-L-ornithine (cyclic): step 1/1.</text>
</comment>
<comment type="pathway">
    <text evidence="1">Amino-acid biosynthesis; L-arginine biosynthesis; N(2)-acetyl-L-ornithine from L-glutamate: step 1/4.</text>
</comment>
<comment type="subunit">
    <text evidence="1">Heterodimer of an alpha and a beta chain.</text>
</comment>
<comment type="subcellular location">
    <subcellularLocation>
        <location evidence="1">Plastid</location>
        <location evidence="1">Chloroplast</location>
    </subcellularLocation>
</comment>
<comment type="miscellaneous">
    <text evidence="1">This protein may be expected to contain an N-terminal transit peptide but none has been predicted.</text>
</comment>
<comment type="similarity">
    <text evidence="1">Belongs to the ArgJ family.</text>
</comment>
<keyword id="KW-0012">Acyltransferase</keyword>
<keyword id="KW-0028">Amino-acid biosynthesis</keyword>
<keyword id="KW-0055">Arginine biosynthesis</keyword>
<keyword id="KW-0068">Autocatalytic cleavage</keyword>
<keyword id="KW-0150">Chloroplast</keyword>
<keyword id="KW-0511">Multifunctional enzyme</keyword>
<keyword id="KW-0934">Plastid</keyword>
<keyword id="KW-1185">Reference proteome</keyword>
<keyword id="KW-0808">Transferase</keyword>
<sequence length="464" mass="47952">MSPPSVLLLHSRIPLQPRPFRMNSRAAPSRVVVCSVASTEGFISAAPILLPDGPWKQVEGGVTAAKGFKAAGIYSGLRAKGEKPDLALVACDVDATVAGAFTTNVVAAAPVLYCKHVLSTSKTGRAVLINAGQANAATGDLGYQDAVDSADAVAKLLNVSTDNILIQSTGVIGQRIKKEALLNSLPRLVGSLSSSVQGANSAAVAITTTDLVSKSIAVQTEIGGVAIRIGGMAKGSGMIHPNMATMLGVLTTDAQVSSDVWREMIRMSVSRSFNQITVDGDTSTNDCVIAMASGLSGLSGIQSLDSIEAQQFQACLDAVMQSLAKSIAWDGEGATCLIEVTVSGANNEAEAAKIARSVASSSLVKAAIFGRDPNWGRIACSVGYSGIQFDANRLDISLGVIPLMKNGQPLPFDRLTASKYLKDAGDAHGTVNIDISVGSGGGNGKAWGCDLSYKYVEINAEYTT</sequence>
<feature type="chain" id="PRO_0000397994" description="Arginine biosynthesis bifunctional protein ArgJ alpha chain" evidence="1">
    <location>
        <begin position="1"/>
        <end position="244"/>
    </location>
</feature>
<feature type="chain" id="PRO_0000397995" description="Arginine biosynthesis bifunctional protein ArgJ beta chain" evidence="1">
    <location>
        <begin position="245"/>
        <end position="464"/>
    </location>
</feature>
<feature type="active site" description="Nucleophile" evidence="1">
    <location>
        <position position="245"/>
    </location>
</feature>
<feature type="binding site" evidence="1">
    <location>
        <position position="208"/>
    </location>
    <ligand>
        <name>substrate</name>
    </ligand>
</feature>
<feature type="binding site" evidence="1">
    <location>
        <position position="234"/>
    </location>
    <ligand>
        <name>substrate</name>
    </ligand>
</feature>
<feature type="binding site" evidence="1">
    <location>
        <position position="245"/>
    </location>
    <ligand>
        <name>substrate</name>
    </ligand>
</feature>
<feature type="binding site" evidence="1">
    <location>
        <position position="332"/>
    </location>
    <ligand>
        <name>substrate</name>
    </ligand>
</feature>
<feature type="binding site" evidence="1">
    <location>
        <position position="459"/>
    </location>
    <ligand>
        <name>substrate</name>
    </ligand>
</feature>
<feature type="binding site" evidence="1">
    <location>
        <position position="464"/>
    </location>
    <ligand>
        <name>substrate</name>
    </ligand>
</feature>
<feature type="site" description="Involved in the stabilization of negative charge on the oxyanion by the formation of the oxyanion hole" evidence="1">
    <location>
        <position position="169"/>
    </location>
</feature>
<feature type="site" description="Involved in the stabilization of negative charge on the oxyanion by the formation of the oxyanion hole" evidence="1">
    <location>
        <position position="170"/>
    </location>
</feature>
<feature type="site" description="Cleavage; by autolysis" evidence="1">
    <location>
        <begin position="244"/>
        <end position="245"/>
    </location>
</feature>
<protein>
    <recommendedName>
        <fullName evidence="1">Arginine biosynthesis bifunctional protein ArgJ, chloroplastic</fullName>
    </recommendedName>
    <domain>
        <recommendedName>
            <fullName evidence="1">Glutamate N-acetyltransferase</fullName>
            <shortName evidence="1">GAT</shortName>
            <ecNumber evidence="1">2.3.1.35</ecNumber>
        </recommendedName>
        <alternativeName>
            <fullName evidence="1">Ornithine acetyltransferase</fullName>
            <shortName evidence="1">OATase</shortName>
        </alternativeName>
        <alternativeName>
            <fullName evidence="1">Ornithine transacetylase</fullName>
        </alternativeName>
    </domain>
    <domain>
        <recommendedName>
            <fullName evidence="1">Amino-acid acetyltransferase</fullName>
            <ecNumber evidence="1">2.3.1.1</ecNumber>
        </recommendedName>
        <alternativeName>
            <fullName evidence="1">N-acetylglutamate synthase</fullName>
            <shortName evidence="1">AGS</shortName>
        </alternativeName>
    </domain>
    <component>
        <recommendedName>
            <fullName evidence="1">Arginine biosynthesis bifunctional protein ArgJ alpha chain</fullName>
        </recommendedName>
    </component>
    <component>
        <recommendedName>
            <fullName evidence="1">Arginine biosynthesis bifunctional protein ArgJ beta chain</fullName>
        </recommendedName>
    </component>
</protein>
<name>ARGJ_MAIZE</name>
<accession>C0PF72</accession>
<organism>
    <name type="scientific">Zea mays</name>
    <name type="common">Maize</name>
    <dbReference type="NCBI Taxonomy" id="4577"/>
    <lineage>
        <taxon>Eukaryota</taxon>
        <taxon>Viridiplantae</taxon>
        <taxon>Streptophyta</taxon>
        <taxon>Embryophyta</taxon>
        <taxon>Tracheophyta</taxon>
        <taxon>Spermatophyta</taxon>
        <taxon>Magnoliopsida</taxon>
        <taxon>Liliopsida</taxon>
        <taxon>Poales</taxon>
        <taxon>Poaceae</taxon>
        <taxon>PACMAD clade</taxon>
        <taxon>Panicoideae</taxon>
        <taxon>Andropogonodae</taxon>
        <taxon>Andropogoneae</taxon>
        <taxon>Tripsacinae</taxon>
        <taxon>Zea</taxon>
    </lineage>
</organism>
<proteinExistence type="evidence at transcript level"/>
<reference key="1">
    <citation type="submission" date="2009-02" db="EMBL/GenBank/DDBJ databases">
        <title>Maize full-length cDNA project.</title>
        <authorList>
            <person name="Yu Y."/>
            <person name="Currie J."/>
            <person name="Lomeli R."/>
            <person name="Angelova A."/>
            <person name="Collura K."/>
            <person name="Wissotski M."/>
            <person name="Campos D."/>
            <person name="Kudrna D."/>
            <person name="Golser W."/>
            <person name="Ashely E."/>
            <person name="Haller K."/>
            <person name="Descour A."/>
            <person name="Fernandes J."/>
            <person name="Soderlund C."/>
            <person name="Walbot V."/>
        </authorList>
    </citation>
    <scope>NUCLEOTIDE SEQUENCE [MRNA]</scope>
    <source>
        <strain>cv. B73</strain>
    </source>
</reference>
<dbReference type="EC" id="2.3.1.35" evidence="1"/>
<dbReference type="EC" id="2.3.1.1" evidence="1"/>
<dbReference type="EMBL" id="BT066941">
    <property type="protein sequence ID" value="ACN33838.1"/>
    <property type="molecule type" value="mRNA"/>
</dbReference>
<dbReference type="RefSeq" id="NP_001169464.1">
    <property type="nucleotide sequence ID" value="NM_001175993.1"/>
</dbReference>
<dbReference type="SMR" id="C0PF72"/>
<dbReference type="FunCoup" id="C0PF72">
    <property type="interactions" value="1454"/>
</dbReference>
<dbReference type="STRING" id="4577.C0PF72"/>
<dbReference type="MEROPS" id="T05.002"/>
<dbReference type="PaxDb" id="4577-GRMZM2G044237_P03"/>
<dbReference type="EnsemblPlants" id="Zm00001eb012670_T001">
    <property type="protein sequence ID" value="Zm00001eb012670_P001"/>
    <property type="gene ID" value="Zm00001eb012670"/>
</dbReference>
<dbReference type="GeneID" id="100383335"/>
<dbReference type="Gramene" id="Zm00001eb012670_T001">
    <property type="protein sequence ID" value="Zm00001eb012670_P001"/>
    <property type="gene ID" value="Zm00001eb012670"/>
</dbReference>
<dbReference type="KEGG" id="zma:100383335"/>
<dbReference type="eggNOG" id="KOG2786">
    <property type="taxonomic scope" value="Eukaryota"/>
</dbReference>
<dbReference type="HOGENOM" id="CLU_027172_1_1_1"/>
<dbReference type="InParanoid" id="C0PF72"/>
<dbReference type="OMA" id="WGRIVMA"/>
<dbReference type="OrthoDB" id="2017946at2759"/>
<dbReference type="UniPathway" id="UPA00068">
    <property type="reaction ID" value="UER00106"/>
</dbReference>
<dbReference type="UniPathway" id="UPA00068">
    <property type="reaction ID" value="UER00111"/>
</dbReference>
<dbReference type="Proteomes" id="UP000007305">
    <property type="component" value="Chromosome 1"/>
</dbReference>
<dbReference type="ExpressionAtlas" id="C0PF72">
    <property type="expression patterns" value="baseline and differential"/>
</dbReference>
<dbReference type="GO" id="GO:0009507">
    <property type="term" value="C:chloroplast"/>
    <property type="evidence" value="ECO:0007669"/>
    <property type="project" value="UniProtKB-SubCell"/>
</dbReference>
<dbReference type="GO" id="GO:0004358">
    <property type="term" value="F:glutamate N-acetyltransferase activity"/>
    <property type="evidence" value="ECO:0007669"/>
    <property type="project" value="UniProtKB-UniRule"/>
</dbReference>
<dbReference type="GO" id="GO:0004042">
    <property type="term" value="F:L-glutamate N-acetyltransferase activity"/>
    <property type="evidence" value="ECO:0000318"/>
    <property type="project" value="GO_Central"/>
</dbReference>
<dbReference type="GO" id="GO:0006526">
    <property type="term" value="P:L-arginine biosynthetic process"/>
    <property type="evidence" value="ECO:0007669"/>
    <property type="project" value="UniProtKB-UniRule"/>
</dbReference>
<dbReference type="GO" id="GO:0006592">
    <property type="term" value="P:ornithine biosynthetic process"/>
    <property type="evidence" value="ECO:0000318"/>
    <property type="project" value="GO_Central"/>
</dbReference>
<dbReference type="CDD" id="cd02152">
    <property type="entry name" value="OAT"/>
    <property type="match status" value="1"/>
</dbReference>
<dbReference type="FunFam" id="3.10.20.340:FF:000001">
    <property type="entry name" value="Arginine biosynthesis bifunctional protein ArgJ, chloroplastic"/>
    <property type="match status" value="1"/>
</dbReference>
<dbReference type="FunFam" id="3.60.70.12:FF:000001">
    <property type="entry name" value="Arginine biosynthesis bifunctional protein ArgJ, chloroplastic"/>
    <property type="match status" value="1"/>
</dbReference>
<dbReference type="Gene3D" id="3.10.20.340">
    <property type="entry name" value="ArgJ beta chain, C-terminal domain"/>
    <property type="match status" value="1"/>
</dbReference>
<dbReference type="Gene3D" id="3.60.70.12">
    <property type="entry name" value="L-amino peptidase D-ALA esterase/amidase"/>
    <property type="match status" value="1"/>
</dbReference>
<dbReference type="HAMAP" id="MF_01106">
    <property type="entry name" value="ArgJ"/>
    <property type="match status" value="1"/>
</dbReference>
<dbReference type="InterPro" id="IPR002813">
    <property type="entry name" value="Arg_biosynth_ArgJ"/>
</dbReference>
<dbReference type="InterPro" id="IPR016117">
    <property type="entry name" value="ArgJ-like_dom_sf"/>
</dbReference>
<dbReference type="InterPro" id="IPR042195">
    <property type="entry name" value="ArgJ_beta_C"/>
</dbReference>
<dbReference type="NCBIfam" id="TIGR00120">
    <property type="entry name" value="ArgJ"/>
    <property type="match status" value="1"/>
</dbReference>
<dbReference type="NCBIfam" id="NF003802">
    <property type="entry name" value="PRK05388.1"/>
    <property type="match status" value="1"/>
</dbReference>
<dbReference type="PANTHER" id="PTHR23100">
    <property type="entry name" value="ARGININE BIOSYNTHESIS BIFUNCTIONAL PROTEIN ARGJ"/>
    <property type="match status" value="1"/>
</dbReference>
<dbReference type="PANTHER" id="PTHR23100:SF0">
    <property type="entry name" value="ARGININE BIOSYNTHESIS BIFUNCTIONAL PROTEIN ARGJ, MITOCHONDRIAL"/>
    <property type="match status" value="1"/>
</dbReference>
<dbReference type="Pfam" id="PF01960">
    <property type="entry name" value="ArgJ"/>
    <property type="match status" value="1"/>
</dbReference>
<dbReference type="SUPFAM" id="SSF56266">
    <property type="entry name" value="DmpA/ArgJ-like"/>
    <property type="match status" value="1"/>
</dbReference>
<evidence type="ECO:0000255" key="1">
    <source>
        <dbReference type="HAMAP-Rule" id="MF_03124"/>
    </source>
</evidence>